<feature type="chain" id="PRO_0000063491" description="Chaperonin GroEL">
    <location>
        <begin position="1"/>
        <end position="547"/>
    </location>
</feature>
<feature type="binding site" evidence="1">
    <location>
        <begin position="30"/>
        <end position="33"/>
    </location>
    <ligand>
        <name>ATP</name>
        <dbReference type="ChEBI" id="CHEBI:30616"/>
    </ligand>
</feature>
<feature type="binding site" evidence="1">
    <location>
        <position position="51"/>
    </location>
    <ligand>
        <name>ATP</name>
        <dbReference type="ChEBI" id="CHEBI:30616"/>
    </ligand>
</feature>
<feature type="binding site" evidence="1">
    <location>
        <begin position="87"/>
        <end position="91"/>
    </location>
    <ligand>
        <name>ATP</name>
        <dbReference type="ChEBI" id="CHEBI:30616"/>
    </ligand>
</feature>
<feature type="binding site" evidence="1">
    <location>
        <position position="415"/>
    </location>
    <ligand>
        <name>ATP</name>
        <dbReference type="ChEBI" id="CHEBI:30616"/>
    </ligand>
</feature>
<feature type="binding site" evidence="1">
    <location>
        <position position="495"/>
    </location>
    <ligand>
        <name>ATP</name>
        <dbReference type="ChEBI" id="CHEBI:30616"/>
    </ligand>
</feature>
<keyword id="KW-0067">ATP-binding</keyword>
<keyword id="KW-0143">Chaperone</keyword>
<keyword id="KW-0963">Cytoplasm</keyword>
<keyword id="KW-0413">Isomerase</keyword>
<keyword id="KW-0547">Nucleotide-binding</keyword>
<keyword id="KW-1185">Reference proteome</keyword>
<evidence type="ECO:0000255" key="1">
    <source>
        <dbReference type="HAMAP-Rule" id="MF_00600"/>
    </source>
</evidence>
<accession>Q8Y1P8</accession>
<proteinExistence type="inferred from homology"/>
<organism>
    <name type="scientific">Ralstonia nicotianae (strain ATCC BAA-1114 / GMI1000)</name>
    <name type="common">Ralstonia solanacearum</name>
    <dbReference type="NCBI Taxonomy" id="267608"/>
    <lineage>
        <taxon>Bacteria</taxon>
        <taxon>Pseudomonadati</taxon>
        <taxon>Pseudomonadota</taxon>
        <taxon>Betaproteobacteria</taxon>
        <taxon>Burkholderiales</taxon>
        <taxon>Burkholderiaceae</taxon>
        <taxon>Ralstonia</taxon>
        <taxon>Ralstonia solanacearum species complex</taxon>
    </lineage>
</organism>
<sequence length="547" mass="57404">MAAKDVVFGDAARAKMVEGVNILANAVKVTLGPKGRNVVLERSFGGPTVTKDGVSVAKEIELKDKLQNMGAQMVKEVASKTSDNAGDGTTTATVLAQSIVREGMKYVAAGMNPMDLKRGIDKAVAAAVEELKKISKPTTTSKEIAQVGAISANSDESIGARIAEAMDKVGKEGVITVEDGKSLEDELDVVEGMQFDRGYLSPYFINNPEKQVVQLDNPFVLLFDKKISNIRDLLPVLEQVAKAGRPLLIVAEDVEGEALATLVVNNIRGILKTAAVKAPGFGDRRKAMLEDIAILTGGQVIAEEVGLTLEKATLNDLGQAKRVEIGKENTTIIDGAGDARNIEARVKQVRAQIEEATSDYDREKLQERVAKLAGGVAVIKVGAATEVEMKEKKARVEDALHATRAAVEEGIVAGGGVALLRARALISGLKGANADQDAGIKIVLRAMEEPLRQIVTNAGDEASVVVANVIAGKGNYGYNASTGEYGDLVEMGVLDPTKVTRTALQNAASVASLMLTTDCAVAELPKDDAAPAMPGGMGGMGGMDGMM</sequence>
<reference key="1">
    <citation type="journal article" date="2002" name="Nature">
        <title>Genome sequence of the plant pathogen Ralstonia solanacearum.</title>
        <authorList>
            <person name="Salanoubat M."/>
            <person name="Genin S."/>
            <person name="Artiguenave F."/>
            <person name="Gouzy J."/>
            <person name="Mangenot S."/>
            <person name="Arlat M."/>
            <person name="Billault A."/>
            <person name="Brottier P."/>
            <person name="Camus J.-C."/>
            <person name="Cattolico L."/>
            <person name="Chandler M."/>
            <person name="Choisne N."/>
            <person name="Claudel-Renard C."/>
            <person name="Cunnac S."/>
            <person name="Demange N."/>
            <person name="Gaspin C."/>
            <person name="Lavie M."/>
            <person name="Moisan A."/>
            <person name="Robert C."/>
            <person name="Saurin W."/>
            <person name="Schiex T."/>
            <person name="Siguier P."/>
            <person name="Thebault P."/>
            <person name="Whalen M."/>
            <person name="Wincker P."/>
            <person name="Levy M."/>
            <person name="Weissenbach J."/>
            <person name="Boucher C.A."/>
        </authorList>
    </citation>
    <scope>NUCLEOTIDE SEQUENCE [LARGE SCALE GENOMIC DNA]</scope>
    <source>
        <strain>ATCC BAA-1114 / GMI1000</strain>
    </source>
</reference>
<name>CH60_RALN1</name>
<dbReference type="EC" id="5.6.1.7" evidence="1"/>
<dbReference type="EMBL" id="AL646052">
    <property type="protein sequence ID" value="CAD14172.1"/>
    <property type="molecule type" value="Genomic_DNA"/>
</dbReference>
<dbReference type="RefSeq" id="WP_011000599.1">
    <property type="nucleotide sequence ID" value="NC_003295.1"/>
</dbReference>
<dbReference type="SMR" id="Q8Y1P8"/>
<dbReference type="STRING" id="267608.RSc0642"/>
<dbReference type="EnsemblBacteria" id="CAD14172">
    <property type="protein sequence ID" value="CAD14172"/>
    <property type="gene ID" value="RSc0642"/>
</dbReference>
<dbReference type="KEGG" id="rso:RSc0642"/>
<dbReference type="eggNOG" id="COG0459">
    <property type="taxonomic scope" value="Bacteria"/>
</dbReference>
<dbReference type="HOGENOM" id="CLU_016503_3_0_4"/>
<dbReference type="Proteomes" id="UP000001436">
    <property type="component" value="Chromosome"/>
</dbReference>
<dbReference type="GO" id="GO:0005737">
    <property type="term" value="C:cytoplasm"/>
    <property type="evidence" value="ECO:0007669"/>
    <property type="project" value="UniProtKB-SubCell"/>
</dbReference>
<dbReference type="GO" id="GO:0005524">
    <property type="term" value="F:ATP binding"/>
    <property type="evidence" value="ECO:0007669"/>
    <property type="project" value="UniProtKB-UniRule"/>
</dbReference>
<dbReference type="GO" id="GO:0140662">
    <property type="term" value="F:ATP-dependent protein folding chaperone"/>
    <property type="evidence" value="ECO:0007669"/>
    <property type="project" value="InterPro"/>
</dbReference>
<dbReference type="GO" id="GO:0016853">
    <property type="term" value="F:isomerase activity"/>
    <property type="evidence" value="ECO:0007669"/>
    <property type="project" value="UniProtKB-KW"/>
</dbReference>
<dbReference type="GO" id="GO:0051082">
    <property type="term" value="F:unfolded protein binding"/>
    <property type="evidence" value="ECO:0007669"/>
    <property type="project" value="UniProtKB-UniRule"/>
</dbReference>
<dbReference type="GO" id="GO:0042026">
    <property type="term" value="P:protein refolding"/>
    <property type="evidence" value="ECO:0007669"/>
    <property type="project" value="UniProtKB-UniRule"/>
</dbReference>
<dbReference type="CDD" id="cd03344">
    <property type="entry name" value="GroEL"/>
    <property type="match status" value="1"/>
</dbReference>
<dbReference type="FunFam" id="1.10.560.10:FF:000001">
    <property type="entry name" value="60 kDa chaperonin"/>
    <property type="match status" value="1"/>
</dbReference>
<dbReference type="FunFam" id="3.50.7.10:FF:000001">
    <property type="entry name" value="60 kDa chaperonin"/>
    <property type="match status" value="1"/>
</dbReference>
<dbReference type="Gene3D" id="3.50.7.10">
    <property type="entry name" value="GroEL"/>
    <property type="match status" value="1"/>
</dbReference>
<dbReference type="Gene3D" id="1.10.560.10">
    <property type="entry name" value="GroEL-like equatorial domain"/>
    <property type="match status" value="1"/>
</dbReference>
<dbReference type="Gene3D" id="3.30.260.10">
    <property type="entry name" value="TCP-1-like chaperonin intermediate domain"/>
    <property type="match status" value="1"/>
</dbReference>
<dbReference type="HAMAP" id="MF_00600">
    <property type="entry name" value="CH60"/>
    <property type="match status" value="1"/>
</dbReference>
<dbReference type="InterPro" id="IPR018370">
    <property type="entry name" value="Chaperonin_Cpn60_CS"/>
</dbReference>
<dbReference type="InterPro" id="IPR001844">
    <property type="entry name" value="Cpn60/GroEL"/>
</dbReference>
<dbReference type="InterPro" id="IPR002423">
    <property type="entry name" value="Cpn60/GroEL/TCP-1"/>
</dbReference>
<dbReference type="InterPro" id="IPR027409">
    <property type="entry name" value="GroEL-like_apical_dom_sf"/>
</dbReference>
<dbReference type="InterPro" id="IPR027413">
    <property type="entry name" value="GROEL-like_equatorial_sf"/>
</dbReference>
<dbReference type="InterPro" id="IPR027410">
    <property type="entry name" value="TCP-1-like_intermed_sf"/>
</dbReference>
<dbReference type="NCBIfam" id="TIGR02348">
    <property type="entry name" value="GroEL"/>
    <property type="match status" value="1"/>
</dbReference>
<dbReference type="NCBIfam" id="NF000592">
    <property type="entry name" value="PRK00013.1"/>
    <property type="match status" value="1"/>
</dbReference>
<dbReference type="NCBIfam" id="NF009487">
    <property type="entry name" value="PRK12849.1"/>
    <property type="match status" value="1"/>
</dbReference>
<dbReference type="NCBIfam" id="NF009488">
    <property type="entry name" value="PRK12850.1"/>
    <property type="match status" value="1"/>
</dbReference>
<dbReference type="NCBIfam" id="NF009489">
    <property type="entry name" value="PRK12851.1"/>
    <property type="match status" value="1"/>
</dbReference>
<dbReference type="PANTHER" id="PTHR45633">
    <property type="entry name" value="60 KDA HEAT SHOCK PROTEIN, MITOCHONDRIAL"/>
    <property type="match status" value="1"/>
</dbReference>
<dbReference type="Pfam" id="PF00118">
    <property type="entry name" value="Cpn60_TCP1"/>
    <property type="match status" value="1"/>
</dbReference>
<dbReference type="PRINTS" id="PR00298">
    <property type="entry name" value="CHAPERONIN60"/>
</dbReference>
<dbReference type="SUPFAM" id="SSF52029">
    <property type="entry name" value="GroEL apical domain-like"/>
    <property type="match status" value="1"/>
</dbReference>
<dbReference type="SUPFAM" id="SSF48592">
    <property type="entry name" value="GroEL equatorial domain-like"/>
    <property type="match status" value="1"/>
</dbReference>
<dbReference type="SUPFAM" id="SSF54849">
    <property type="entry name" value="GroEL-intermediate domain like"/>
    <property type="match status" value="1"/>
</dbReference>
<dbReference type="PROSITE" id="PS00296">
    <property type="entry name" value="CHAPERONINS_CPN60"/>
    <property type="match status" value="1"/>
</dbReference>
<protein>
    <recommendedName>
        <fullName evidence="1">Chaperonin GroEL</fullName>
        <ecNumber evidence="1">5.6.1.7</ecNumber>
    </recommendedName>
    <alternativeName>
        <fullName evidence="1">60 kDa chaperonin</fullName>
    </alternativeName>
    <alternativeName>
        <fullName evidence="1">Chaperonin-60</fullName>
        <shortName evidence="1">Cpn60</shortName>
    </alternativeName>
</protein>
<comment type="function">
    <text evidence="1">Together with its co-chaperonin GroES, plays an essential role in assisting protein folding. The GroEL-GroES system forms a nano-cage that allows encapsulation of the non-native substrate proteins and provides a physical environment optimized to promote and accelerate protein folding.</text>
</comment>
<comment type="catalytic activity">
    <reaction evidence="1">
        <text>ATP + H2O + a folded polypeptide = ADP + phosphate + an unfolded polypeptide.</text>
        <dbReference type="EC" id="5.6.1.7"/>
    </reaction>
</comment>
<comment type="subunit">
    <text evidence="1">Forms a cylinder of 14 subunits composed of two heptameric rings stacked back-to-back. Interacts with the co-chaperonin GroES.</text>
</comment>
<comment type="subcellular location">
    <subcellularLocation>
        <location evidence="1">Cytoplasm</location>
    </subcellularLocation>
</comment>
<comment type="similarity">
    <text evidence="1">Belongs to the chaperonin (HSP60) family.</text>
</comment>
<gene>
    <name evidence="1" type="primary">groEL</name>
    <name evidence="1" type="synonym">groL</name>
    <name type="synonym">mopA</name>
    <name type="ordered locus">RSc0642</name>
    <name type="ORF">RS01546</name>
</gene>